<keyword id="KW-0012">Acyltransferase</keyword>
<keyword id="KW-0319">Glycerol metabolism</keyword>
<keyword id="KW-0444">Lipid biosynthesis</keyword>
<keyword id="KW-0443">Lipid metabolism</keyword>
<keyword id="KW-0472">Membrane</keyword>
<keyword id="KW-1185">Reference proteome</keyword>
<keyword id="KW-0808">Transferase</keyword>
<keyword id="KW-0812">Transmembrane</keyword>
<keyword id="KW-1133">Transmembrane helix</keyword>
<feature type="chain" id="PRO_0000398612" description="Putative phospholipid:diacylglycerol acyltransferase 2">
    <location>
        <begin position="1"/>
        <end position="665"/>
    </location>
</feature>
<feature type="transmembrane region" description="Helical" evidence="3">
    <location>
        <begin position="48"/>
        <end position="68"/>
    </location>
</feature>
<feature type="active site" description="Acyl-ester intermediate" evidence="3">
    <location>
        <position position="237"/>
    </location>
</feature>
<feature type="active site" description="Charge relay system" evidence="1">
    <location>
        <position position="567"/>
    </location>
</feature>
<feature type="active site" description="Charge relay system" evidence="1">
    <location>
        <position position="620"/>
    </location>
</feature>
<protein>
    <recommendedName>
        <fullName>Putative phospholipid:diacylglycerol acyltransferase 2</fullName>
        <shortName>AtPDAT2</shortName>
        <ecNumber evidence="2">2.3.1.158</ecNumber>
    </recommendedName>
</protein>
<dbReference type="EC" id="2.3.1.158" evidence="2"/>
<dbReference type="EMBL" id="AL391254">
    <property type="protein sequence ID" value="CAC03533.1"/>
    <property type="molecule type" value="Genomic_DNA"/>
</dbReference>
<dbReference type="EMBL" id="CP002686">
    <property type="protein sequence ID" value="AEE77959.1"/>
    <property type="molecule type" value="Genomic_DNA"/>
</dbReference>
<dbReference type="PIR" id="T51780">
    <property type="entry name" value="T51780"/>
</dbReference>
<dbReference type="RefSeq" id="NP_190069.1">
    <property type="nucleotide sequence ID" value="NM_114352.2"/>
</dbReference>
<dbReference type="FunCoup" id="Q9FYC7">
    <property type="interactions" value="162"/>
</dbReference>
<dbReference type="STRING" id="3702.Q9FYC7"/>
<dbReference type="ESTHER" id="arath-PDAT2">
    <property type="family name" value="PC-sterol_acyltransferase"/>
</dbReference>
<dbReference type="PaxDb" id="3702-AT3G44830.1"/>
<dbReference type="ProteomicsDB" id="236288"/>
<dbReference type="EnsemblPlants" id="AT3G44830.1">
    <property type="protein sequence ID" value="AT3G44830.1"/>
    <property type="gene ID" value="AT3G44830"/>
</dbReference>
<dbReference type="GeneID" id="823617"/>
<dbReference type="Gramene" id="AT3G44830.1">
    <property type="protein sequence ID" value="AT3G44830.1"/>
    <property type="gene ID" value="AT3G44830"/>
</dbReference>
<dbReference type="KEGG" id="ath:AT3G44830"/>
<dbReference type="Araport" id="AT3G44830"/>
<dbReference type="TAIR" id="AT3G44830"/>
<dbReference type="eggNOG" id="KOG2369">
    <property type="taxonomic scope" value="Eukaryota"/>
</dbReference>
<dbReference type="HOGENOM" id="CLU_016065_1_0_1"/>
<dbReference type="InParanoid" id="Q9FYC7"/>
<dbReference type="OMA" id="CWLIGYL"/>
<dbReference type="PhylomeDB" id="Q9FYC7"/>
<dbReference type="BioCyc" id="ARA:AT3G44830-MONOMER"/>
<dbReference type="BRENDA" id="2.3.1.158">
    <property type="organism ID" value="399"/>
</dbReference>
<dbReference type="PRO" id="PR:Q9FYC7"/>
<dbReference type="Proteomes" id="UP000006548">
    <property type="component" value="Chromosome 3"/>
</dbReference>
<dbReference type="ExpressionAtlas" id="Q9FYC7">
    <property type="expression patterns" value="baseline and differential"/>
</dbReference>
<dbReference type="GO" id="GO:0016020">
    <property type="term" value="C:membrane"/>
    <property type="evidence" value="ECO:0007669"/>
    <property type="project" value="UniProtKB-SubCell"/>
</dbReference>
<dbReference type="GO" id="GO:0008374">
    <property type="term" value="F:O-acyltransferase activity"/>
    <property type="evidence" value="ECO:0007669"/>
    <property type="project" value="InterPro"/>
</dbReference>
<dbReference type="GO" id="GO:0046027">
    <property type="term" value="F:phospholipid:diacylglycerol acyltransferase activity"/>
    <property type="evidence" value="ECO:0007669"/>
    <property type="project" value="UniProtKB-EC"/>
</dbReference>
<dbReference type="GO" id="GO:0006071">
    <property type="term" value="P:glycerol metabolic process"/>
    <property type="evidence" value="ECO:0007669"/>
    <property type="project" value="UniProtKB-KW"/>
</dbReference>
<dbReference type="GO" id="GO:0006629">
    <property type="term" value="P:lipid metabolic process"/>
    <property type="evidence" value="ECO:0007669"/>
    <property type="project" value="UniProtKB-KW"/>
</dbReference>
<dbReference type="Gene3D" id="3.40.50.1820">
    <property type="entry name" value="alpha/beta hydrolase"/>
    <property type="match status" value="1"/>
</dbReference>
<dbReference type="InterPro" id="IPR029058">
    <property type="entry name" value="AB_hydrolase_fold"/>
</dbReference>
<dbReference type="InterPro" id="IPR003386">
    <property type="entry name" value="LACT/PDAT_acylTrfase"/>
</dbReference>
<dbReference type="PANTHER" id="PTHR11440">
    <property type="entry name" value="LECITHIN-CHOLESTEROL ACYLTRANSFERASE-RELATED"/>
    <property type="match status" value="1"/>
</dbReference>
<dbReference type="Pfam" id="PF02450">
    <property type="entry name" value="LCAT"/>
    <property type="match status" value="1"/>
</dbReference>
<dbReference type="SUPFAM" id="SSF53474">
    <property type="entry name" value="alpha/beta-Hydrolases"/>
    <property type="match status" value="1"/>
</dbReference>
<organism>
    <name type="scientific">Arabidopsis thaliana</name>
    <name type="common">Mouse-ear cress</name>
    <dbReference type="NCBI Taxonomy" id="3702"/>
    <lineage>
        <taxon>Eukaryota</taxon>
        <taxon>Viridiplantae</taxon>
        <taxon>Streptophyta</taxon>
        <taxon>Embryophyta</taxon>
        <taxon>Tracheophyta</taxon>
        <taxon>Spermatophyta</taxon>
        <taxon>Magnoliopsida</taxon>
        <taxon>eudicotyledons</taxon>
        <taxon>Gunneridae</taxon>
        <taxon>Pentapetalae</taxon>
        <taxon>rosids</taxon>
        <taxon>malvids</taxon>
        <taxon>Brassicales</taxon>
        <taxon>Brassicaceae</taxon>
        <taxon>Camelineae</taxon>
        <taxon>Arabidopsis</taxon>
    </lineage>
</organism>
<name>PDAT2_ARATH</name>
<comment type="catalytic activity">
    <reaction evidence="2">
        <text>a glycerophospholipid + a 1,2-diacyl-sn-glycerol = a monoacylglycerophospholipid + a triacyl-sn-glycerol</text>
        <dbReference type="Rhea" id="RHEA:14057"/>
        <dbReference type="ChEBI" id="CHEBI:17815"/>
        <dbReference type="ChEBI" id="CHEBI:64615"/>
        <dbReference type="ChEBI" id="CHEBI:136912"/>
        <dbReference type="ChEBI" id="CHEBI:136913"/>
        <dbReference type="EC" id="2.3.1.158"/>
    </reaction>
</comment>
<comment type="subcellular location">
    <subcellularLocation>
        <location evidence="4">Membrane</location>
        <topology evidence="4">Single-pass membrane protein</topology>
    </subcellularLocation>
</comment>
<comment type="similarity">
    <text evidence="4">Belongs to the AB hydrolase superfamily. Lipase family.</text>
</comment>
<sequence length="665" mass="73653">MSPLLRFRKLSSFSEDTINPKPKQSATVEKPKRRRSGRCSCVDSCCWLIGYLCTAWWLLLFLYHSVPVPAMLQAPESPGTRLSRDGVKAFHPVILVPGIVTGGLELWEGRPCAEGLFRKRLWGASFSEILRRPLCWLEHLSLDSETGLDPSGIRVRAVPGLVAADYFAPCYFAWAVLIENLAKIGYEGKNLHMASYDWRLSFHNTEVRDQSLSRLKSKIELMYATNGFKKVVVVPHSMGAIYFLHFLKWVETPLPDGGGGGGPGWCAKHIKSVVNIGPAFLGVPKAVSNLLSAEGKDIAYARSLAPGLLDSELLKLQTLEHLMRMSHSWDSIVSLLPKGGEAIWGDLDSHAEEGLNCIYSKRKSSQLSLSNLHKQNYSLKPVSRVKEPAKYGRIVSFGKRASELPSSQLSTLNVKELSRVDGNSNDSTSCGEFWSEYNEMSRESIVKVAENTAYTATTVLDLLRFIAPKMMRRAEAHFSHGIADDLDDPKYGHYKYWSNPLETKLPEAPEMEMYCLYGVGIPTERSYIYKLATSSGKCKSSIPFRIDGSLDGDDVCLKGGTRFADGDESVPVISAGFMCAKGWRGKTRFNPSGMDTFLREYKHKPPGSLLESRGTESGAHVDIMGNVGLIEDVLRIAAGASGQEIGGDRIYSDVMRMSERISIKL</sequence>
<proteinExistence type="inferred from homology"/>
<gene>
    <name type="primary">PDAT2</name>
    <name type="ordered locus">At3g44830</name>
    <name type="ORF">F28D10.20</name>
</gene>
<reference key="1">
    <citation type="journal article" date="2000" name="Nature">
        <title>Sequence and analysis of chromosome 3 of the plant Arabidopsis thaliana.</title>
        <authorList>
            <person name="Salanoubat M."/>
            <person name="Lemcke K."/>
            <person name="Rieger M."/>
            <person name="Ansorge W."/>
            <person name="Unseld M."/>
            <person name="Fartmann B."/>
            <person name="Valle G."/>
            <person name="Bloecker H."/>
            <person name="Perez-Alonso M."/>
            <person name="Obermaier B."/>
            <person name="Delseny M."/>
            <person name="Boutry M."/>
            <person name="Grivell L.A."/>
            <person name="Mache R."/>
            <person name="Puigdomenech P."/>
            <person name="De Simone V."/>
            <person name="Choisne N."/>
            <person name="Artiguenave F."/>
            <person name="Robert C."/>
            <person name="Brottier P."/>
            <person name="Wincker P."/>
            <person name="Cattolico L."/>
            <person name="Weissenbach J."/>
            <person name="Saurin W."/>
            <person name="Quetier F."/>
            <person name="Schaefer M."/>
            <person name="Mueller-Auer S."/>
            <person name="Gabel C."/>
            <person name="Fuchs M."/>
            <person name="Benes V."/>
            <person name="Wurmbach E."/>
            <person name="Drzonek H."/>
            <person name="Erfle H."/>
            <person name="Jordan N."/>
            <person name="Bangert S."/>
            <person name="Wiedelmann R."/>
            <person name="Kranz H."/>
            <person name="Voss H."/>
            <person name="Holland R."/>
            <person name="Brandt P."/>
            <person name="Nyakatura G."/>
            <person name="Vezzi A."/>
            <person name="D'Angelo M."/>
            <person name="Pallavicini A."/>
            <person name="Toppo S."/>
            <person name="Simionati B."/>
            <person name="Conrad A."/>
            <person name="Hornischer K."/>
            <person name="Kauer G."/>
            <person name="Loehnert T.-H."/>
            <person name="Nordsiek G."/>
            <person name="Reichelt J."/>
            <person name="Scharfe M."/>
            <person name="Schoen O."/>
            <person name="Bargues M."/>
            <person name="Terol J."/>
            <person name="Climent J."/>
            <person name="Navarro P."/>
            <person name="Collado C."/>
            <person name="Perez-Perez A."/>
            <person name="Ottenwaelder B."/>
            <person name="Duchemin D."/>
            <person name="Cooke R."/>
            <person name="Laudie M."/>
            <person name="Berger-Llauro C."/>
            <person name="Purnelle B."/>
            <person name="Masuy D."/>
            <person name="de Haan M."/>
            <person name="Maarse A.C."/>
            <person name="Alcaraz J.-P."/>
            <person name="Cottet A."/>
            <person name="Casacuberta E."/>
            <person name="Monfort A."/>
            <person name="Argiriou A."/>
            <person name="Flores M."/>
            <person name="Liguori R."/>
            <person name="Vitale D."/>
            <person name="Mannhaupt G."/>
            <person name="Haase D."/>
            <person name="Schoof H."/>
            <person name="Rudd S."/>
            <person name="Zaccaria P."/>
            <person name="Mewes H.-W."/>
            <person name="Mayer K.F.X."/>
            <person name="Kaul S."/>
            <person name="Town C.D."/>
            <person name="Koo H.L."/>
            <person name="Tallon L.J."/>
            <person name="Jenkins J."/>
            <person name="Rooney T."/>
            <person name="Rizzo M."/>
            <person name="Walts A."/>
            <person name="Utterback T."/>
            <person name="Fujii C.Y."/>
            <person name="Shea T.P."/>
            <person name="Creasy T.H."/>
            <person name="Haas B."/>
            <person name="Maiti R."/>
            <person name="Wu D."/>
            <person name="Peterson J."/>
            <person name="Van Aken S."/>
            <person name="Pai G."/>
            <person name="Militscher J."/>
            <person name="Sellers P."/>
            <person name="Gill J.E."/>
            <person name="Feldblyum T.V."/>
            <person name="Preuss D."/>
            <person name="Lin X."/>
            <person name="Nierman W.C."/>
            <person name="Salzberg S.L."/>
            <person name="White O."/>
            <person name="Venter J.C."/>
            <person name="Fraser C.M."/>
            <person name="Kaneko T."/>
            <person name="Nakamura Y."/>
            <person name="Sato S."/>
            <person name="Kato T."/>
            <person name="Asamizu E."/>
            <person name="Sasamoto S."/>
            <person name="Kimura T."/>
            <person name="Idesawa K."/>
            <person name="Kawashima K."/>
            <person name="Kishida Y."/>
            <person name="Kiyokawa C."/>
            <person name="Kohara M."/>
            <person name="Matsumoto M."/>
            <person name="Matsuno A."/>
            <person name="Muraki A."/>
            <person name="Nakayama S."/>
            <person name="Nakazaki N."/>
            <person name="Shinpo S."/>
            <person name="Takeuchi C."/>
            <person name="Wada T."/>
            <person name="Watanabe A."/>
            <person name="Yamada M."/>
            <person name="Yasuda M."/>
            <person name="Tabata S."/>
        </authorList>
    </citation>
    <scope>NUCLEOTIDE SEQUENCE [LARGE SCALE GENOMIC DNA]</scope>
    <source>
        <strain>cv. Columbia</strain>
    </source>
</reference>
<reference key="2">
    <citation type="journal article" date="2017" name="Plant J.">
        <title>Araport11: a complete reannotation of the Arabidopsis thaliana reference genome.</title>
        <authorList>
            <person name="Cheng C.Y."/>
            <person name="Krishnakumar V."/>
            <person name="Chan A.P."/>
            <person name="Thibaud-Nissen F."/>
            <person name="Schobel S."/>
            <person name="Town C.D."/>
        </authorList>
    </citation>
    <scope>GENOME REANNOTATION</scope>
    <source>
        <strain>cv. Columbia</strain>
    </source>
</reference>
<reference key="3">
    <citation type="journal article" date="2004" name="Eur. J. Biochem.">
        <title>Expression in yeast of a novel phospholipase A1 cDNA from Arabidopsis thaliana.</title>
        <authorList>
            <person name="Noiriel A."/>
            <person name="Benveniste P."/>
            <person name="Banas A."/>
            <person name="Stymne S."/>
            <person name="Bouvier-Nave P."/>
        </authorList>
    </citation>
    <scope>GENE FAMILY</scope>
    <scope>NOMENCLATURE</scope>
</reference>
<reference key="4">
    <citation type="journal article" date="2004" name="Plant Physiol.">
        <title>Cloning and functional characterization of a phospholipid:diacylglycerol acyltransferase from Arabidopsis.</title>
        <authorList>
            <person name="Stahl U."/>
            <person name="Carlsson A.S."/>
            <person name="Lenman M."/>
            <person name="Dahlqvist A."/>
            <person name="Huang B."/>
            <person name="Banas W."/>
            <person name="Banas A."/>
            <person name="Stymne S."/>
        </authorList>
    </citation>
    <scope>GENE FAMILY</scope>
</reference>
<evidence type="ECO:0000250" key="1"/>
<evidence type="ECO:0000250" key="2">
    <source>
        <dbReference type="UniProtKB" id="O94680"/>
    </source>
</evidence>
<evidence type="ECO:0000255" key="3"/>
<evidence type="ECO:0000305" key="4"/>
<accession>Q9FYC7</accession>